<dbReference type="EMBL" id="GU396269">
    <property type="protein sequence ID" value="ADD16917.1"/>
    <property type="molecule type" value="mRNA"/>
</dbReference>
<dbReference type="EMBL" id="AADN02078046">
    <property type="status" value="NOT_ANNOTATED_CDS"/>
    <property type="molecule type" value="Genomic_DNA"/>
</dbReference>
<dbReference type="EMBL" id="AADN02078047">
    <property type="status" value="NOT_ANNOTATED_CDS"/>
    <property type="molecule type" value="Genomic_DNA"/>
</dbReference>
<dbReference type="EMBL" id="AADN02078048">
    <property type="status" value="NOT_ANNOTATED_CDS"/>
    <property type="molecule type" value="Genomic_DNA"/>
</dbReference>
<dbReference type="EMBL" id="AADN02078049">
    <property type="status" value="NOT_ANNOTATED_CDS"/>
    <property type="molecule type" value="Genomic_DNA"/>
</dbReference>
<dbReference type="EMBL" id="AADN02078050">
    <property type="status" value="NOT_ANNOTATED_CDS"/>
    <property type="molecule type" value="Genomic_DNA"/>
</dbReference>
<dbReference type="EMBL" id="HQ127225">
    <property type="protein sequence ID" value="ADW41582.1"/>
    <property type="molecule type" value="mRNA"/>
</dbReference>
<dbReference type="EMBL" id="AF123456">
    <property type="protein sequence ID" value="AAF19666.1"/>
    <property type="molecule type" value="mRNA"/>
</dbReference>
<dbReference type="EMBL" id="AF211349">
    <property type="protein sequence ID" value="AAF19034.1"/>
    <property type="molecule type" value="mRNA"/>
</dbReference>
<dbReference type="SMR" id="Q9PTQ7"/>
<dbReference type="FunCoup" id="Q9PTQ7">
    <property type="interactions" value="99"/>
</dbReference>
<dbReference type="STRING" id="9031.ENSGALP00000037648"/>
<dbReference type="PaxDb" id="9031-ENSGALP00000037648"/>
<dbReference type="VEuPathDB" id="HostDB:geneid_769693"/>
<dbReference type="eggNOG" id="KOG3815">
    <property type="taxonomic scope" value="Eukaryota"/>
</dbReference>
<dbReference type="InParanoid" id="Q9PTQ7"/>
<dbReference type="OrthoDB" id="9946337at2759"/>
<dbReference type="Proteomes" id="UP000000539">
    <property type="component" value="Unassembled WGS sequence"/>
</dbReference>
<dbReference type="GO" id="GO:0005634">
    <property type="term" value="C:nucleus"/>
    <property type="evidence" value="ECO:0000318"/>
    <property type="project" value="GO_Central"/>
</dbReference>
<dbReference type="GO" id="GO:0000981">
    <property type="term" value="F:DNA-binding transcription factor activity, RNA polymerase II-specific"/>
    <property type="evidence" value="ECO:0000318"/>
    <property type="project" value="GO_Central"/>
</dbReference>
<dbReference type="GO" id="GO:0046872">
    <property type="term" value="F:metal ion binding"/>
    <property type="evidence" value="ECO:0007669"/>
    <property type="project" value="UniProtKB-KW"/>
</dbReference>
<dbReference type="GO" id="GO:0000978">
    <property type="term" value="F:RNA polymerase II cis-regulatory region sequence-specific DNA binding"/>
    <property type="evidence" value="ECO:0000318"/>
    <property type="project" value="GO_Central"/>
</dbReference>
<dbReference type="GO" id="GO:0030154">
    <property type="term" value="P:cell differentiation"/>
    <property type="evidence" value="ECO:0007669"/>
    <property type="project" value="UniProtKB-KW"/>
</dbReference>
<dbReference type="GO" id="GO:0030238">
    <property type="term" value="P:male sex determination"/>
    <property type="evidence" value="ECO:0000304"/>
    <property type="project" value="AgBase"/>
</dbReference>
<dbReference type="GO" id="GO:0006357">
    <property type="term" value="P:regulation of transcription by RNA polymerase II"/>
    <property type="evidence" value="ECO:0000318"/>
    <property type="project" value="GO_Central"/>
</dbReference>
<dbReference type="GO" id="GO:0072520">
    <property type="term" value="P:seminiferous tubule development"/>
    <property type="evidence" value="ECO:0000303"/>
    <property type="project" value="AgBase"/>
</dbReference>
<dbReference type="GO" id="GO:0007548">
    <property type="term" value="P:sex differentiation"/>
    <property type="evidence" value="ECO:0000318"/>
    <property type="project" value="GO_Central"/>
</dbReference>
<dbReference type="FunFam" id="4.10.1040.10:FF:000001">
    <property type="entry name" value="doublesex- and mab-3-related transcription factor 1"/>
    <property type="match status" value="1"/>
</dbReference>
<dbReference type="Gene3D" id="4.10.1040.10">
    <property type="entry name" value="DM DNA-binding domain"/>
    <property type="match status" value="1"/>
</dbReference>
<dbReference type="InterPro" id="IPR001275">
    <property type="entry name" value="DM_DNA-bd"/>
</dbReference>
<dbReference type="InterPro" id="IPR036407">
    <property type="entry name" value="DM_DNA-bd_sf"/>
</dbReference>
<dbReference type="InterPro" id="IPR026607">
    <property type="entry name" value="DMRT"/>
</dbReference>
<dbReference type="InterPro" id="IPR022114">
    <property type="entry name" value="DMRT1-like"/>
</dbReference>
<dbReference type="PANTHER" id="PTHR12322">
    <property type="entry name" value="DOUBLESEX AND MAB-3 RELATED TRANSCRIPTION FACTOR DMRT"/>
    <property type="match status" value="1"/>
</dbReference>
<dbReference type="PANTHER" id="PTHR12322:SF70">
    <property type="entry name" value="DOUBLESEX- AND MAB-3-RELATED TRANSCRIPTION FACTOR 1"/>
    <property type="match status" value="1"/>
</dbReference>
<dbReference type="Pfam" id="PF00751">
    <property type="entry name" value="DM"/>
    <property type="match status" value="1"/>
</dbReference>
<dbReference type="Pfam" id="PF12374">
    <property type="entry name" value="Dmrt1"/>
    <property type="match status" value="1"/>
</dbReference>
<dbReference type="SMART" id="SM00301">
    <property type="entry name" value="DM"/>
    <property type="match status" value="1"/>
</dbReference>
<dbReference type="SUPFAM" id="SSF82927">
    <property type="entry name" value="Cysteine-rich DNA binding domain, (DM domain)"/>
    <property type="match status" value="1"/>
</dbReference>
<dbReference type="PROSITE" id="PS40000">
    <property type="entry name" value="DM_1"/>
    <property type="match status" value="1"/>
</dbReference>
<dbReference type="PROSITE" id="PS50809">
    <property type="entry name" value="DM_2"/>
    <property type="match status" value="1"/>
</dbReference>
<comment type="function">
    <text evidence="5">Transcription factor that plays a key role in male sex determination. Acts both as a transcription repressor and repressor.</text>
</comment>
<comment type="subcellular location">
    <subcellularLocation>
        <location evidence="1">Nucleus</location>
    </subcellularLocation>
</comment>
<comment type="alternative products">
    <event type="alternative splicing"/>
    <isoform>
        <id>Q9PTQ7-1</id>
        <name>1</name>
        <sequence type="displayed"/>
    </isoform>
    <isoform>
        <id>Q9PTQ7-2</id>
        <name>2</name>
        <sequence type="described" ref="VSP_042966"/>
    </isoform>
</comment>
<comment type="tissue specificity">
    <text evidence="3 4">Expressed in the genital ridge and Wolffian duct prior to sexual differentiation and is expressed at higher levels in ZZ than in ZW embryos.</text>
</comment>
<comment type="developmental stage">
    <text evidence="4">Expressed at stage 19 before sexual differentiation, at stage 25 when the genital ridges are forming and also at stage 31 when sexual differentiation is beginning. Also expressed from stage 25 in the Wolffian ducts. More abundant in ZZ (male) than ZW (female) gonads.</text>
</comment>
<comment type="miscellaneous">
    <text evidence="8">Knockdown of DMRT1 in early embryos results in the feminization of male gonads, affecting tissue organization, gene expression and germ cell distribution. These experiments are in support of the Z dosage hypothesis for avian sex determination or at least, for gonadal sex development: according to this theory ZZ males would have a higher dosage of DMRT1 which would initiate testicular differentiation and expression of the key conserved Sertoli cell differentiation factor, SOX9 (PubMed:19710650).</text>
</comment>
<comment type="similarity">
    <text evidence="7">Belongs to the DMRT family.</text>
</comment>
<keyword id="KW-0010">Activator</keyword>
<keyword id="KW-0025">Alternative splicing</keyword>
<keyword id="KW-0217">Developmental protein</keyword>
<keyword id="KW-0221">Differentiation</keyword>
<keyword id="KW-0238">DNA-binding</keyword>
<keyword id="KW-0479">Metal-binding</keyword>
<keyword id="KW-0539">Nucleus</keyword>
<keyword id="KW-1185">Reference proteome</keyword>
<keyword id="KW-0678">Repressor</keyword>
<keyword id="KW-0726">Sexual differentiation</keyword>
<keyword id="KW-0804">Transcription</keyword>
<keyword id="KW-0805">Transcription regulation</keyword>
<keyword id="KW-0862">Zinc</keyword>
<protein>
    <recommendedName>
        <fullName>Doublesex- and mab-3-related transcription factor 1</fullName>
    </recommendedName>
</protein>
<gene>
    <name type="primary">DMRT1</name>
</gene>
<name>DMRT1_CHICK</name>
<organism>
    <name type="scientific">Gallus gallus</name>
    <name type="common">Chicken</name>
    <dbReference type="NCBI Taxonomy" id="9031"/>
    <lineage>
        <taxon>Eukaryota</taxon>
        <taxon>Metazoa</taxon>
        <taxon>Chordata</taxon>
        <taxon>Craniata</taxon>
        <taxon>Vertebrata</taxon>
        <taxon>Euteleostomi</taxon>
        <taxon>Archelosauria</taxon>
        <taxon>Archosauria</taxon>
        <taxon>Dinosauria</taxon>
        <taxon>Saurischia</taxon>
        <taxon>Theropoda</taxon>
        <taxon>Coelurosauria</taxon>
        <taxon>Aves</taxon>
        <taxon>Neognathae</taxon>
        <taxon>Galloanserae</taxon>
        <taxon>Galliformes</taxon>
        <taxon>Phasianidae</taxon>
        <taxon>Phasianinae</taxon>
        <taxon>Gallus</taxon>
    </lineage>
</organism>
<accession>Q9PTQ7</accession>
<accession>D3Y4D9</accession>
<accession>E9LT10</accession>
<accession>F1N8U8</accession>
<accession>Q9PTB5</accession>
<proteinExistence type="evidence at transcript level"/>
<evidence type="ECO:0000255" key="1">
    <source>
        <dbReference type="PROSITE-ProRule" id="PRU00070"/>
    </source>
</evidence>
<evidence type="ECO:0000256" key="2">
    <source>
        <dbReference type="SAM" id="MobiDB-lite"/>
    </source>
</evidence>
<evidence type="ECO:0000269" key="3">
    <source>
    </source>
</evidence>
<evidence type="ECO:0000269" key="4">
    <source>
    </source>
</evidence>
<evidence type="ECO:0000269" key="5">
    <source>
    </source>
</evidence>
<evidence type="ECO:0000303" key="6">
    <source>
    </source>
</evidence>
<evidence type="ECO:0000305" key="7"/>
<evidence type="ECO:0000305" key="8">
    <source>
    </source>
</evidence>
<feature type="chain" id="PRO_0000207045" description="Doublesex- and mab-3-related transcription factor 1">
    <location>
        <begin position="1"/>
        <end position="365"/>
    </location>
</feature>
<feature type="DNA-binding region" description="DM" evidence="1">
    <location>
        <begin position="63"/>
        <end position="109"/>
    </location>
</feature>
<feature type="region of interest" description="Disordered" evidence="2">
    <location>
        <begin position="1"/>
        <end position="47"/>
    </location>
</feature>
<feature type="region of interest" description="Disordered" evidence="2">
    <location>
        <begin position="120"/>
        <end position="170"/>
    </location>
</feature>
<feature type="region of interest" description="Disordered" evidence="2">
    <location>
        <begin position="316"/>
        <end position="365"/>
    </location>
</feature>
<feature type="compositionally biased region" description="Gly residues" evidence="2">
    <location>
        <begin position="35"/>
        <end position="45"/>
    </location>
</feature>
<feature type="compositionally biased region" description="Low complexity" evidence="2">
    <location>
        <begin position="141"/>
        <end position="170"/>
    </location>
</feature>
<feature type="compositionally biased region" description="Polar residues" evidence="2">
    <location>
        <begin position="324"/>
        <end position="340"/>
    </location>
</feature>
<feature type="compositionally biased region" description="Basic and acidic residues" evidence="2">
    <location>
        <begin position="341"/>
        <end position="351"/>
    </location>
</feature>
<feature type="splice variant" id="VSP_042966" description="In isoform 2." evidence="6">
    <original>VSPVLEGE</original>
    <variation>LSAST</variation>
    <location>
        <begin position="358"/>
        <end position="365"/>
    </location>
</feature>
<feature type="sequence conflict" description="In Ref. 3; ADW41582." evidence="7" ref="3">
    <original>V</original>
    <variation>A</variation>
    <location>
        <position position="27"/>
    </location>
</feature>
<feature type="sequence conflict" description="In Ref. 5; AAF19034." evidence="7" ref="5">
    <original>A</original>
    <variation>G</variation>
    <location>
        <position position="56"/>
    </location>
</feature>
<feature type="sequence conflict" description="In Ref. 4; AAF19666." evidence="7" ref="4">
    <original>A</original>
    <variation>V</variation>
    <location>
        <position position="108"/>
    </location>
</feature>
<feature type="sequence conflict" description="In Ref. 1; ADD16917." evidence="7" ref="1">
    <original>I</original>
    <variation>V</variation>
    <location>
        <position position="124"/>
    </location>
</feature>
<reference key="1">
    <citation type="submission" date="2010-01" db="EMBL/GenBank/DDBJ databases">
        <authorList>
            <person name="Zhao D.B."/>
        </authorList>
    </citation>
    <scope>NUCLEOTIDE SEQUENCE [MRNA]</scope>
    <source>
        <tissue>Gonad</tissue>
    </source>
</reference>
<reference key="2">
    <citation type="journal article" date="2004" name="Nature">
        <title>Sequence and comparative analysis of the chicken genome provide unique perspectives on vertebrate evolution.</title>
        <authorList>
            <person name="Hillier L.W."/>
            <person name="Miller W."/>
            <person name="Birney E."/>
            <person name="Warren W."/>
            <person name="Hardison R.C."/>
            <person name="Ponting C.P."/>
            <person name="Bork P."/>
            <person name="Burt D.W."/>
            <person name="Groenen M.A.M."/>
            <person name="Delany M.E."/>
            <person name="Dodgson J.B."/>
            <person name="Chinwalla A.T."/>
            <person name="Cliften P.F."/>
            <person name="Clifton S.W."/>
            <person name="Delehaunty K.D."/>
            <person name="Fronick C."/>
            <person name="Fulton R.S."/>
            <person name="Graves T.A."/>
            <person name="Kremitzki C."/>
            <person name="Layman D."/>
            <person name="Magrini V."/>
            <person name="McPherson J.D."/>
            <person name="Miner T.L."/>
            <person name="Minx P."/>
            <person name="Nash W.E."/>
            <person name="Nhan M.N."/>
            <person name="Nelson J.O."/>
            <person name="Oddy L.G."/>
            <person name="Pohl C.S."/>
            <person name="Randall-Maher J."/>
            <person name="Smith S.M."/>
            <person name="Wallis J.W."/>
            <person name="Yang S.-P."/>
            <person name="Romanov M.N."/>
            <person name="Rondelli C.M."/>
            <person name="Paton B."/>
            <person name="Smith J."/>
            <person name="Morrice D."/>
            <person name="Daniels L."/>
            <person name="Tempest H.G."/>
            <person name="Robertson L."/>
            <person name="Masabanda J.S."/>
            <person name="Griffin D.K."/>
            <person name="Vignal A."/>
            <person name="Fillon V."/>
            <person name="Jacobbson L."/>
            <person name="Kerje S."/>
            <person name="Andersson L."/>
            <person name="Crooijmans R.P."/>
            <person name="Aerts J."/>
            <person name="van der Poel J.J."/>
            <person name="Ellegren H."/>
            <person name="Caldwell R.B."/>
            <person name="Hubbard S.J."/>
            <person name="Grafham D.V."/>
            <person name="Kierzek A.M."/>
            <person name="McLaren S.R."/>
            <person name="Overton I.M."/>
            <person name="Arakawa H."/>
            <person name="Beattie K.J."/>
            <person name="Bezzubov Y."/>
            <person name="Boardman P.E."/>
            <person name="Bonfield J.K."/>
            <person name="Croning M.D.R."/>
            <person name="Davies R.M."/>
            <person name="Francis M.D."/>
            <person name="Humphray S.J."/>
            <person name="Scott C.E."/>
            <person name="Taylor R.G."/>
            <person name="Tickle C."/>
            <person name="Brown W.R.A."/>
            <person name="Rogers J."/>
            <person name="Buerstedde J.-M."/>
            <person name="Wilson S.A."/>
            <person name="Stubbs L."/>
            <person name="Ovcharenko I."/>
            <person name="Gordon L."/>
            <person name="Lucas S."/>
            <person name="Miller M.M."/>
            <person name="Inoko H."/>
            <person name="Shiina T."/>
            <person name="Kaufman J."/>
            <person name="Salomonsen J."/>
            <person name="Skjoedt K."/>
            <person name="Wong G.K.-S."/>
            <person name="Wang J."/>
            <person name="Liu B."/>
            <person name="Wang J."/>
            <person name="Yu J."/>
            <person name="Yang H."/>
            <person name="Nefedov M."/>
            <person name="Koriabine M."/>
            <person name="Dejong P.J."/>
            <person name="Goodstadt L."/>
            <person name="Webber C."/>
            <person name="Dickens N.J."/>
            <person name="Letunic I."/>
            <person name="Suyama M."/>
            <person name="Torrents D."/>
            <person name="von Mering C."/>
            <person name="Zdobnov E.M."/>
            <person name="Makova K."/>
            <person name="Nekrutenko A."/>
            <person name="Elnitski L."/>
            <person name="Eswara P."/>
            <person name="King D.C."/>
            <person name="Yang S.-P."/>
            <person name="Tyekucheva S."/>
            <person name="Radakrishnan A."/>
            <person name="Harris R.S."/>
            <person name="Chiaromonte F."/>
            <person name="Taylor J."/>
            <person name="He J."/>
            <person name="Rijnkels M."/>
            <person name="Griffiths-Jones S."/>
            <person name="Ureta-Vidal A."/>
            <person name="Hoffman M.M."/>
            <person name="Severin J."/>
            <person name="Searle S.M.J."/>
            <person name="Law A.S."/>
            <person name="Speed D."/>
            <person name="Waddington D."/>
            <person name="Cheng Z."/>
            <person name="Tuzun E."/>
            <person name="Eichler E."/>
            <person name="Bao Z."/>
            <person name="Flicek P."/>
            <person name="Shteynberg D.D."/>
            <person name="Brent M.R."/>
            <person name="Bye J.M."/>
            <person name="Huckle E.J."/>
            <person name="Chatterji S."/>
            <person name="Dewey C."/>
            <person name="Pachter L."/>
            <person name="Kouranov A."/>
            <person name="Mourelatos Z."/>
            <person name="Hatzigeorgiou A.G."/>
            <person name="Paterson A.H."/>
            <person name="Ivarie R."/>
            <person name="Brandstrom M."/>
            <person name="Axelsson E."/>
            <person name="Backstrom N."/>
            <person name="Berlin S."/>
            <person name="Webster M.T."/>
            <person name="Pourquie O."/>
            <person name="Reymond A."/>
            <person name="Ucla C."/>
            <person name="Antonarakis S.E."/>
            <person name="Long M."/>
            <person name="Emerson J.J."/>
            <person name="Betran E."/>
            <person name="Dupanloup I."/>
            <person name="Kaessmann H."/>
            <person name="Hinrichs A.S."/>
            <person name="Bejerano G."/>
            <person name="Furey T.S."/>
            <person name="Harte R.A."/>
            <person name="Raney B."/>
            <person name="Siepel A."/>
            <person name="Kent W.J."/>
            <person name="Haussler D."/>
            <person name="Eyras E."/>
            <person name="Castelo R."/>
            <person name="Abril J.F."/>
            <person name="Castellano S."/>
            <person name="Camara F."/>
            <person name="Parra G."/>
            <person name="Guigo R."/>
            <person name="Bourque G."/>
            <person name="Tesler G."/>
            <person name="Pevzner P.A."/>
            <person name="Smit A."/>
            <person name="Fulton L.A."/>
            <person name="Mardis E.R."/>
            <person name="Wilson R.K."/>
        </authorList>
    </citation>
    <scope>NUCLEOTIDE SEQUENCE [LARGE SCALE GENOMIC DNA]</scope>
    <source>
        <strain>Red jungle fowl</strain>
    </source>
</reference>
<reference key="3">
    <citation type="journal article" date="2000" name="Cytogenet. Cell Genet.">
        <title>Sex-specific expression of an evolutionarily conserved male regulatory gene, DMRT1, in birds.</title>
        <authorList>
            <person name="Shan Z."/>
            <person name="Nanda I."/>
            <person name="Wang Y."/>
            <person name="Schmid M."/>
            <person name="Vortkamp A."/>
            <person name="Haaf T."/>
        </authorList>
    </citation>
    <scope>NUCLEOTIDE SEQUENCE [MRNA] OF 19-362 (ISOFORM 2)</scope>
    <scope>TISSUE SPECIFICITY</scope>
    <scope>DEVELOPMENTAL STAGE</scope>
</reference>
<reference key="4">
    <citation type="journal article" date="1999" name="Nat. Genet.">
        <title>300 million years of conserved synteny between chicken Z and human chromosome 9.</title>
        <authorList>
            <person name="Nanda I."/>
            <person name="Shan Z."/>
            <person name="Schartl M."/>
            <person name="Burt D.W."/>
            <person name="Koehler M."/>
            <person name="Nothwang H.-G."/>
            <person name="Gruetzner F."/>
            <person name="Paton I.R."/>
            <person name="Windsor D."/>
            <person name="Dunn I."/>
            <person name="Engel W."/>
            <person name="Staeheli P."/>
            <person name="Mizuno S."/>
            <person name="Haaf T."/>
            <person name="Schmid M."/>
        </authorList>
    </citation>
    <scope>NUCLEOTIDE SEQUENCE [MRNA] OF 55-365 (ISOFORM 1)</scope>
</reference>
<reference key="5">
    <citation type="journal article" date="1999" name="Dev. Biol.">
        <title>Expression of Dmrt1 in the genital ridge of mouse and chicken embryos suggests a role in vertebrate sexual development.</title>
        <authorList>
            <person name="Raymond C.S."/>
            <person name="Kettlewell J.R."/>
            <person name="Hirsch B."/>
            <person name="Bardwell V.J."/>
            <person name="Zarkower D."/>
        </authorList>
    </citation>
    <scope>NUCLEOTIDE SEQUENCE [MRNA] OF 55-365 (ISOFORM 1)</scope>
    <scope>TISSUE SPECIFICITY</scope>
    <source>
        <tissue>Testis</tissue>
    </source>
</reference>
<reference key="6">
    <citation type="journal article" date="2009" name="Nature">
        <title>The avian Z-linked gene DMRT1 is required for male sex determination in the chicken.</title>
        <authorList>
            <person name="Smith C.A."/>
            <person name="Roeszler K.N."/>
            <person name="Ohnesorg T."/>
            <person name="Cummins D.M."/>
            <person name="Farlie P.G."/>
            <person name="Doran T.J."/>
            <person name="Sinclair A.H."/>
        </authorList>
    </citation>
    <scope>FUNCTION</scope>
</reference>
<sequence length="365" mass="38836">MPGDSPVVSKRAAPKPRRAAMPGDSPVVSKPPDGAGPGDKAGGLGKAAAQMAAAPAAGKKLPRLPKCARCRNHGYSSPLKGHKRFCMWRDCQCKKCSLIAERQRVMAAQVALRRQQAQEEELGISHPVPLPSAPEPVVKKSSSSSSCLLQDSSSPAHSTSTVAAAAASAPPEGRMLIQDIPSIPSRGHLESTSDLVVDSTYYSSFYQPSLYPYYNNLYNYSQYQMAVATESSSSETGGTFVGSAMKNSLRSLPATYMSSQSGKQWQMKGMENRHAMSSQYRMCSYYPPTSYLGQGVGSPTCVTQILASEDTPSYSESKARVFSPPSSQDSGLGCLSSSESTKGDLECEPHQEPGAFAVSPVLEGE</sequence>